<gene>
    <name type="primary">bst1</name>
    <name type="ORF">SPAC824.02</name>
</gene>
<reference key="1">
    <citation type="journal article" date="2002" name="Nature">
        <title>The genome sequence of Schizosaccharomyces pombe.</title>
        <authorList>
            <person name="Wood V."/>
            <person name="Gwilliam R."/>
            <person name="Rajandream M.A."/>
            <person name="Lyne M.H."/>
            <person name="Lyne R."/>
            <person name="Stewart A."/>
            <person name="Sgouros J.G."/>
            <person name="Peat N."/>
            <person name="Hayles J."/>
            <person name="Baker S.G."/>
            <person name="Basham D."/>
            <person name="Bowman S."/>
            <person name="Brooks K."/>
            <person name="Brown D."/>
            <person name="Brown S."/>
            <person name="Chillingworth T."/>
            <person name="Churcher C.M."/>
            <person name="Collins M."/>
            <person name="Connor R."/>
            <person name="Cronin A."/>
            <person name="Davis P."/>
            <person name="Feltwell T."/>
            <person name="Fraser A."/>
            <person name="Gentles S."/>
            <person name="Goble A."/>
            <person name="Hamlin N."/>
            <person name="Harris D.E."/>
            <person name="Hidalgo J."/>
            <person name="Hodgson G."/>
            <person name="Holroyd S."/>
            <person name="Hornsby T."/>
            <person name="Howarth S."/>
            <person name="Huckle E.J."/>
            <person name="Hunt S."/>
            <person name="Jagels K."/>
            <person name="James K.D."/>
            <person name="Jones L."/>
            <person name="Jones M."/>
            <person name="Leather S."/>
            <person name="McDonald S."/>
            <person name="McLean J."/>
            <person name="Mooney P."/>
            <person name="Moule S."/>
            <person name="Mungall K.L."/>
            <person name="Murphy L.D."/>
            <person name="Niblett D."/>
            <person name="Odell C."/>
            <person name="Oliver K."/>
            <person name="O'Neil S."/>
            <person name="Pearson D."/>
            <person name="Quail M.A."/>
            <person name="Rabbinowitsch E."/>
            <person name="Rutherford K.M."/>
            <person name="Rutter S."/>
            <person name="Saunders D."/>
            <person name="Seeger K."/>
            <person name="Sharp S."/>
            <person name="Skelton J."/>
            <person name="Simmonds M.N."/>
            <person name="Squares R."/>
            <person name="Squares S."/>
            <person name="Stevens K."/>
            <person name="Taylor K."/>
            <person name="Taylor R.G."/>
            <person name="Tivey A."/>
            <person name="Walsh S.V."/>
            <person name="Warren T."/>
            <person name="Whitehead S."/>
            <person name="Woodward J.R."/>
            <person name="Volckaert G."/>
            <person name="Aert R."/>
            <person name="Robben J."/>
            <person name="Grymonprez B."/>
            <person name="Weltjens I."/>
            <person name="Vanstreels E."/>
            <person name="Rieger M."/>
            <person name="Schaefer M."/>
            <person name="Mueller-Auer S."/>
            <person name="Gabel C."/>
            <person name="Fuchs M."/>
            <person name="Duesterhoeft A."/>
            <person name="Fritzc C."/>
            <person name="Holzer E."/>
            <person name="Moestl D."/>
            <person name="Hilbert H."/>
            <person name="Borzym K."/>
            <person name="Langer I."/>
            <person name="Beck A."/>
            <person name="Lehrach H."/>
            <person name="Reinhardt R."/>
            <person name="Pohl T.M."/>
            <person name="Eger P."/>
            <person name="Zimmermann W."/>
            <person name="Wedler H."/>
            <person name="Wambutt R."/>
            <person name="Purnelle B."/>
            <person name="Goffeau A."/>
            <person name="Cadieu E."/>
            <person name="Dreano S."/>
            <person name="Gloux S."/>
            <person name="Lelaure V."/>
            <person name="Mottier S."/>
            <person name="Galibert F."/>
            <person name="Aves S.J."/>
            <person name="Xiang Z."/>
            <person name="Hunt C."/>
            <person name="Moore K."/>
            <person name="Hurst S.M."/>
            <person name="Lucas M."/>
            <person name="Rochet M."/>
            <person name="Gaillardin C."/>
            <person name="Tallada V.A."/>
            <person name="Garzon A."/>
            <person name="Thode G."/>
            <person name="Daga R.R."/>
            <person name="Cruzado L."/>
            <person name="Jimenez J."/>
            <person name="Sanchez M."/>
            <person name="del Rey F."/>
            <person name="Benito J."/>
            <person name="Dominguez A."/>
            <person name="Revuelta J.L."/>
            <person name="Moreno S."/>
            <person name="Armstrong J."/>
            <person name="Forsburg S.L."/>
            <person name="Cerutti L."/>
            <person name="Lowe T."/>
            <person name="McCombie W.R."/>
            <person name="Paulsen I."/>
            <person name="Potashkin J."/>
            <person name="Shpakovski G.V."/>
            <person name="Ussery D."/>
            <person name="Barrell B.G."/>
            <person name="Nurse P."/>
        </authorList>
    </citation>
    <scope>NUCLEOTIDE SEQUENCE [LARGE SCALE GENOMIC DNA]</scope>
    <source>
        <strain>972 / ATCC 24843</strain>
    </source>
</reference>
<evidence type="ECO:0000250" key="1"/>
<evidence type="ECO:0000255" key="2"/>
<evidence type="ECO:0000256" key="3">
    <source>
        <dbReference type="SAM" id="MobiDB-lite"/>
    </source>
</evidence>
<evidence type="ECO:0000305" key="4"/>
<sequence length="1142" mass="129413">MKDDKGRSDTVNGYYISNSKLSSGFYKRNNANTASNDEKPNLEQNDIPSVTSSGSSTPSSISIEKEIKISKGNVIVKAIRSWSLYVAIIAILLLLVILHSFQGRPQDNGCGKSYVWPSYVRFVDFDERYTRFANKYSLYLYREKSVEESDEPSGIPILFIPGNAGSYKQVRAFAAQAAHVYANAYAEDADGTLNAGKLVPDFFVVDFNEDFSAFHGQTLLDQAEYVNDAIPYILSLYRQNRKISSEYDNEAFPPPTSVILLGHSMGGIVAQATFTMKNYVDGSVNTLITLATPHAMAPLPFDRHLVEFYESIKNFWSQSFLLSPEENSLDDVLLVSIAGGGLDTHVVPEYSSISTFVPPSNGLMVFTSGIPSVWAEIDHQAMAWCENFRRVLIRGIFAIMDARTSKCTVSLNLRKELLSRAYIQGSSFQNDITQISKPIAQYKALDLDLTYVYSEMPGQLLFLNQLGVSYIRHHIFPIPKPTSSIDRFELLTDQPIDLSSSNIKVLACRLDPKIDNTISALLENGNNKVINANCHLLRELVTLLPASTAYTSSPYGGDSFYNYVLPKEKMDDYHFILVSDDSKAPASGFVVGGFSNVSLDPKTIKGSQIELFKSGRKFQFDTKGSISKRFRFPGIQSSIMAYTISVTYELYPGAVPQKEFTPMLKQSIESPFETKYHVNMSNTELSVHGISPFMEFFGKESEKSLTLEFFLNPAIYKSVYVSIQPSYYRSAGRLLMRYRTLLASFPVVVISLAAYNQFRYFHYGSAYLSMSAALEVMIRKGLIKLLFLVSILSIAFSYLISRVELIVADGADPVASWKIFAMMVPKSFWKQNHLLFGLQTAQFWFLAPLLTLMFVGLVITASVIILCVMHLLAFIYGIYLRYKGLTFTGVCQAVKFSFQCLRTRNTRKLDHGEFKKLSSFLSQRNMYYANPSLCYVYGKKHMQARIIGIMLLLLMAMTVVPFQLVYGVALCTQTVTTAKALHLARFCTKSSHYRKKLWDFYNFSCTITILMLLLAPLDFPVLIVWARNLSMHWSIPFPTHHNFFSIIPFILLTEILRTGKMLPRLNDVEYYINNVFLFLLSFYSLIYGAEKPYLIHNVVGLYFFWLLFLYAKNGFFVQNISKWPIIPRMKYFIKHKFLRSIS</sequence>
<feature type="chain" id="PRO_0000277642" description="GPI inositol-deacylase">
    <location>
        <begin position="1"/>
        <end position="1142"/>
    </location>
</feature>
<feature type="transmembrane region" description="Helical" evidence="2">
    <location>
        <begin position="81"/>
        <end position="101"/>
    </location>
</feature>
<feature type="transmembrane region" description="Helical" evidence="2">
    <location>
        <begin position="741"/>
        <end position="761"/>
    </location>
</feature>
<feature type="transmembrane region" description="Helical" evidence="2">
    <location>
        <begin position="781"/>
        <end position="801"/>
    </location>
</feature>
<feature type="transmembrane region" description="Helical" evidence="2">
    <location>
        <begin position="849"/>
        <end position="869"/>
    </location>
</feature>
<feature type="transmembrane region" description="Helical" evidence="2">
    <location>
        <begin position="946"/>
        <end position="966"/>
    </location>
</feature>
<feature type="transmembrane region" description="Helical" evidence="2">
    <location>
        <begin position="1006"/>
        <end position="1026"/>
    </location>
</feature>
<feature type="transmembrane region" description="Helical" evidence="2">
    <location>
        <begin position="1035"/>
        <end position="1055"/>
    </location>
</feature>
<feature type="transmembrane region" description="Helical" evidence="2">
    <location>
        <begin position="1075"/>
        <end position="1095"/>
    </location>
</feature>
<feature type="transmembrane region" description="Helical" evidence="2">
    <location>
        <begin position="1097"/>
        <end position="1117"/>
    </location>
</feature>
<feature type="region of interest" description="Disordered" evidence="3">
    <location>
        <begin position="24"/>
        <end position="59"/>
    </location>
</feature>
<feature type="compositionally biased region" description="Low complexity" evidence="3">
    <location>
        <begin position="47"/>
        <end position="59"/>
    </location>
</feature>
<feature type="active site" evidence="1">
    <location>
        <position position="264"/>
    </location>
</feature>
<feature type="glycosylation site" description="N-linked (GlcNAc...) asparagine" evidence="2">
    <location>
        <position position="596"/>
    </location>
</feature>
<feature type="glycosylation site" description="N-linked (GlcNAc...) asparagine" evidence="2">
    <location>
        <position position="679"/>
    </location>
</feature>
<feature type="glycosylation site" description="N-linked (GlcNAc...) asparagine" evidence="2">
    <location>
        <position position="1002"/>
    </location>
</feature>
<feature type="glycosylation site" description="N-linked (GlcNAc...) asparagine" evidence="2">
    <location>
        <position position="1028"/>
    </location>
</feature>
<feature type="glycosylation site" description="N-linked (GlcNAc...) asparagine" evidence="2">
    <location>
        <position position="1119"/>
    </location>
</feature>
<organism>
    <name type="scientific">Schizosaccharomyces pombe (strain 972 / ATCC 24843)</name>
    <name type="common">Fission yeast</name>
    <dbReference type="NCBI Taxonomy" id="284812"/>
    <lineage>
        <taxon>Eukaryota</taxon>
        <taxon>Fungi</taxon>
        <taxon>Dikarya</taxon>
        <taxon>Ascomycota</taxon>
        <taxon>Taphrinomycotina</taxon>
        <taxon>Schizosaccharomycetes</taxon>
        <taxon>Schizosaccharomycetales</taxon>
        <taxon>Schizosaccharomycetaceae</taxon>
        <taxon>Schizosaccharomyces</taxon>
    </lineage>
</organism>
<protein>
    <recommendedName>
        <fullName>GPI inositol-deacylase</fullName>
        <ecNumber>3.1.-.-</ecNumber>
    </recommendedName>
</protein>
<dbReference type="EC" id="3.1.-.-"/>
<dbReference type="EMBL" id="CU329670">
    <property type="protein sequence ID" value="CAB57332.1"/>
    <property type="molecule type" value="Genomic_DNA"/>
</dbReference>
<dbReference type="PIR" id="T39103">
    <property type="entry name" value="T39103"/>
</dbReference>
<dbReference type="RefSeq" id="NP_593441.1">
    <property type="nucleotide sequence ID" value="NM_001018874.2"/>
</dbReference>
<dbReference type="SMR" id="Q9UT41"/>
<dbReference type="BioGRID" id="279419">
    <property type="interactions" value="57"/>
</dbReference>
<dbReference type="FunCoup" id="Q9UT41">
    <property type="interactions" value="206"/>
</dbReference>
<dbReference type="STRING" id="284812.Q9UT41"/>
<dbReference type="ESTHER" id="schpo-BST1">
    <property type="family name" value="PGAP1"/>
</dbReference>
<dbReference type="GlyCosmos" id="Q9UT41">
    <property type="glycosylation" value="5 sites, No reported glycans"/>
</dbReference>
<dbReference type="iPTMnet" id="Q9UT41"/>
<dbReference type="PaxDb" id="4896-SPAC824.02.1"/>
<dbReference type="EnsemblFungi" id="SPAC824.02.1">
    <property type="protein sequence ID" value="SPAC824.02.1:pep"/>
    <property type="gene ID" value="SPAC824.02"/>
</dbReference>
<dbReference type="GeneID" id="2542981"/>
<dbReference type="KEGG" id="spo:2542981"/>
<dbReference type="PomBase" id="SPAC824.02">
    <property type="gene designation" value="bst1"/>
</dbReference>
<dbReference type="VEuPathDB" id="FungiDB:SPAC824.02"/>
<dbReference type="eggNOG" id="KOG3724">
    <property type="taxonomic scope" value="Eukaryota"/>
</dbReference>
<dbReference type="HOGENOM" id="CLU_006103_0_0_1"/>
<dbReference type="InParanoid" id="Q9UT41"/>
<dbReference type="OMA" id="WVRNLAV"/>
<dbReference type="PhylomeDB" id="Q9UT41"/>
<dbReference type="PRO" id="PR:Q9UT41"/>
<dbReference type="Proteomes" id="UP000002485">
    <property type="component" value="Chromosome I"/>
</dbReference>
<dbReference type="GO" id="GO:0005783">
    <property type="term" value="C:endoplasmic reticulum"/>
    <property type="evidence" value="ECO:0007005"/>
    <property type="project" value="PomBase"/>
</dbReference>
<dbReference type="GO" id="GO:0005789">
    <property type="term" value="C:endoplasmic reticulum membrane"/>
    <property type="evidence" value="ECO:0000305"/>
    <property type="project" value="PomBase"/>
</dbReference>
<dbReference type="GO" id="GO:0005794">
    <property type="term" value="C:Golgi apparatus"/>
    <property type="evidence" value="ECO:0007005"/>
    <property type="project" value="PomBase"/>
</dbReference>
<dbReference type="GO" id="GO:0050185">
    <property type="term" value="F:phosphatidylinositol deacylase activity"/>
    <property type="evidence" value="ECO:0000318"/>
    <property type="project" value="GO_Central"/>
</dbReference>
<dbReference type="GO" id="GO:0006506">
    <property type="term" value="P:GPI anchor biosynthetic process"/>
    <property type="evidence" value="ECO:0000318"/>
    <property type="project" value="GO_Central"/>
</dbReference>
<dbReference type="GO" id="GO:0015031">
    <property type="term" value="P:protein transport"/>
    <property type="evidence" value="ECO:0007669"/>
    <property type="project" value="UniProtKB-KW"/>
</dbReference>
<dbReference type="FunFam" id="3.40.50.1820:FF:000056">
    <property type="entry name" value="GPI inositol-deacylase"/>
    <property type="match status" value="1"/>
</dbReference>
<dbReference type="Gene3D" id="3.40.50.1820">
    <property type="entry name" value="alpha/beta hydrolase"/>
    <property type="match status" value="1"/>
</dbReference>
<dbReference type="InterPro" id="IPR029058">
    <property type="entry name" value="AB_hydrolase_fold"/>
</dbReference>
<dbReference type="InterPro" id="IPR012908">
    <property type="entry name" value="PGAP1-ab_dom-like"/>
</dbReference>
<dbReference type="InterPro" id="IPR039529">
    <property type="entry name" value="PGAP1/BST1"/>
</dbReference>
<dbReference type="InterPro" id="IPR056824">
    <property type="entry name" value="PGAP1_TMD"/>
</dbReference>
<dbReference type="PANTHER" id="PTHR15495:SF7">
    <property type="entry name" value="GPI INOSITOL-DEACYLASE"/>
    <property type="match status" value="1"/>
</dbReference>
<dbReference type="PANTHER" id="PTHR15495">
    <property type="entry name" value="NEGATIVE REGULATOR OF VESICLE FORMATION-RELATED"/>
    <property type="match status" value="1"/>
</dbReference>
<dbReference type="Pfam" id="PF07819">
    <property type="entry name" value="PGAP1"/>
    <property type="match status" value="1"/>
</dbReference>
<dbReference type="Pfam" id="PF25141">
    <property type="entry name" value="PGAP1_2nd"/>
    <property type="match status" value="1"/>
</dbReference>
<dbReference type="Pfam" id="PF25140">
    <property type="entry name" value="PGAP1_TMD"/>
    <property type="match status" value="1"/>
</dbReference>
<dbReference type="SUPFAM" id="SSF53474">
    <property type="entry name" value="alpha/beta-Hydrolases"/>
    <property type="match status" value="1"/>
</dbReference>
<dbReference type="PROSITE" id="PS00120">
    <property type="entry name" value="LIPASE_SER"/>
    <property type="match status" value="1"/>
</dbReference>
<accession>Q9UT41</accession>
<comment type="function">
    <text evidence="1">Involved in inositol deacylation of GPI-anchored proteins which plays important roles in the quality control and ER-associated degradation of GPI-anchored proteins.</text>
</comment>
<comment type="subcellular location">
    <subcellularLocation>
        <location evidence="1">Endoplasmic reticulum membrane</location>
        <topology evidence="1">Multi-pass membrane protein</topology>
    </subcellularLocation>
</comment>
<comment type="similarity">
    <text evidence="4">Belongs to the GPI inositol-deacylase family.</text>
</comment>
<keyword id="KW-0256">Endoplasmic reticulum</keyword>
<keyword id="KW-0325">Glycoprotein</keyword>
<keyword id="KW-0378">Hydrolase</keyword>
<keyword id="KW-0472">Membrane</keyword>
<keyword id="KW-0653">Protein transport</keyword>
<keyword id="KW-1185">Reference proteome</keyword>
<keyword id="KW-0812">Transmembrane</keyword>
<keyword id="KW-1133">Transmembrane helix</keyword>
<keyword id="KW-0813">Transport</keyword>
<name>BST1_SCHPO</name>
<proteinExistence type="inferred from homology"/>